<accession>A1V2L7</accession>
<sequence length="159" mass="17533">MSIEGVLKEGFVTTTADKLINWTRTGSLWPMTFGLACCAVEMMHAGAARYDLDRFGVVFRPSPRQSDVMIVAGTLCNKMAPALRRVYDQMAEPRWVISMGSCANGGGYYHYSYSVVRGCDRIVPVDVYVPGCPPTAEALVYGVIQLQAKIRRTSTIARQ</sequence>
<protein>
    <recommendedName>
        <fullName evidence="2">NADH-quinone oxidoreductase subunit B 1</fullName>
        <ecNumber evidence="2">7.1.1.-</ecNumber>
    </recommendedName>
    <alternativeName>
        <fullName evidence="2">NADH dehydrogenase I subunit B 1</fullName>
    </alternativeName>
    <alternativeName>
        <fullName evidence="2">NDH-1 subunit B 1</fullName>
    </alternativeName>
</protein>
<organism>
    <name type="scientific">Burkholderia mallei (strain SAVP1)</name>
    <dbReference type="NCBI Taxonomy" id="320388"/>
    <lineage>
        <taxon>Bacteria</taxon>
        <taxon>Pseudomonadati</taxon>
        <taxon>Pseudomonadota</taxon>
        <taxon>Betaproteobacteria</taxon>
        <taxon>Burkholderiales</taxon>
        <taxon>Burkholderiaceae</taxon>
        <taxon>Burkholderia</taxon>
        <taxon>pseudomallei group</taxon>
    </lineage>
</organism>
<feature type="chain" id="PRO_0000358375" description="NADH-quinone oxidoreductase subunit B 1">
    <location>
        <begin position="1"/>
        <end position="159"/>
    </location>
</feature>
<feature type="binding site" evidence="2">
    <location>
        <position position="37"/>
    </location>
    <ligand>
        <name>[4Fe-4S] cluster</name>
        <dbReference type="ChEBI" id="CHEBI:49883"/>
    </ligand>
</feature>
<feature type="binding site" evidence="2">
    <location>
        <position position="38"/>
    </location>
    <ligand>
        <name>[4Fe-4S] cluster</name>
        <dbReference type="ChEBI" id="CHEBI:49883"/>
    </ligand>
</feature>
<feature type="binding site" evidence="2">
    <location>
        <position position="102"/>
    </location>
    <ligand>
        <name>[4Fe-4S] cluster</name>
        <dbReference type="ChEBI" id="CHEBI:49883"/>
    </ligand>
</feature>
<feature type="binding site" evidence="2">
    <location>
        <position position="132"/>
    </location>
    <ligand>
        <name>[4Fe-4S] cluster</name>
        <dbReference type="ChEBI" id="CHEBI:49883"/>
    </ligand>
</feature>
<keyword id="KW-0004">4Fe-4S</keyword>
<keyword id="KW-0997">Cell inner membrane</keyword>
<keyword id="KW-1003">Cell membrane</keyword>
<keyword id="KW-0408">Iron</keyword>
<keyword id="KW-0411">Iron-sulfur</keyword>
<keyword id="KW-0472">Membrane</keyword>
<keyword id="KW-0479">Metal-binding</keyword>
<keyword id="KW-0520">NAD</keyword>
<keyword id="KW-0874">Quinone</keyword>
<keyword id="KW-1278">Translocase</keyword>
<keyword id="KW-0813">Transport</keyword>
<keyword id="KW-0830">Ubiquinone</keyword>
<name>NUOB1_BURMS</name>
<reference key="1">
    <citation type="journal article" date="2010" name="Genome Biol. Evol.">
        <title>Continuing evolution of Burkholderia mallei through genome reduction and large-scale rearrangements.</title>
        <authorList>
            <person name="Losada L."/>
            <person name="Ronning C.M."/>
            <person name="DeShazer D."/>
            <person name="Woods D."/>
            <person name="Fedorova N."/>
            <person name="Kim H.S."/>
            <person name="Shabalina S.A."/>
            <person name="Pearson T.R."/>
            <person name="Brinkac L."/>
            <person name="Tan P."/>
            <person name="Nandi T."/>
            <person name="Crabtree J."/>
            <person name="Badger J."/>
            <person name="Beckstrom-Sternberg S."/>
            <person name="Saqib M."/>
            <person name="Schutzer S.E."/>
            <person name="Keim P."/>
            <person name="Nierman W.C."/>
        </authorList>
    </citation>
    <scope>NUCLEOTIDE SEQUENCE [LARGE SCALE GENOMIC DNA]</scope>
    <source>
        <strain>SAVP1</strain>
    </source>
</reference>
<comment type="function">
    <text evidence="1">NDH-1 shuttles electrons from NADH, via FMN and iron-sulfur (Fe-S) centers, to quinones in the respiratory chain. Couples the redox reaction to proton translocation (for every two electrons transferred, four hydrogen ions are translocated across the cytoplasmic membrane), and thus conserves the redox energy in a proton gradient (By similarity).</text>
</comment>
<comment type="catalytic activity">
    <reaction evidence="2">
        <text>a quinone + NADH + 5 H(+)(in) = a quinol + NAD(+) + 4 H(+)(out)</text>
        <dbReference type="Rhea" id="RHEA:57888"/>
        <dbReference type="ChEBI" id="CHEBI:15378"/>
        <dbReference type="ChEBI" id="CHEBI:24646"/>
        <dbReference type="ChEBI" id="CHEBI:57540"/>
        <dbReference type="ChEBI" id="CHEBI:57945"/>
        <dbReference type="ChEBI" id="CHEBI:132124"/>
    </reaction>
</comment>
<comment type="cofactor">
    <cofactor evidence="2">
        <name>[4Fe-4S] cluster</name>
        <dbReference type="ChEBI" id="CHEBI:49883"/>
    </cofactor>
    <text evidence="2">Binds 1 [4Fe-4S] cluster.</text>
</comment>
<comment type="subunit">
    <text evidence="2">NDH-1 is composed of 14 different subunits. Subunits NuoB, C, D, E, F, and G constitute the peripheral sector of the complex.</text>
</comment>
<comment type="subcellular location">
    <subcellularLocation>
        <location evidence="2">Cell inner membrane</location>
        <topology evidence="2">Peripheral membrane protein</topology>
        <orientation evidence="2">Cytoplasmic side</orientation>
    </subcellularLocation>
</comment>
<comment type="similarity">
    <text evidence="2">Belongs to the complex I 20 kDa subunit family.</text>
</comment>
<gene>
    <name evidence="2" type="primary">nuoB1</name>
    <name type="ordered locus">BMASAVP1_A1131</name>
</gene>
<dbReference type="EC" id="7.1.1.-" evidence="2"/>
<dbReference type="EMBL" id="CP000526">
    <property type="protein sequence ID" value="ABM49811.1"/>
    <property type="molecule type" value="Genomic_DNA"/>
</dbReference>
<dbReference type="RefSeq" id="WP_004186402.1">
    <property type="nucleotide sequence ID" value="NC_008785.1"/>
</dbReference>
<dbReference type="SMR" id="A1V2L7"/>
<dbReference type="KEGG" id="bmv:BMASAVP1_A1131"/>
<dbReference type="HOGENOM" id="CLU_055737_7_3_4"/>
<dbReference type="GO" id="GO:0005886">
    <property type="term" value="C:plasma membrane"/>
    <property type="evidence" value="ECO:0007669"/>
    <property type="project" value="UniProtKB-SubCell"/>
</dbReference>
<dbReference type="GO" id="GO:0045271">
    <property type="term" value="C:respiratory chain complex I"/>
    <property type="evidence" value="ECO:0007669"/>
    <property type="project" value="TreeGrafter"/>
</dbReference>
<dbReference type="GO" id="GO:0051539">
    <property type="term" value="F:4 iron, 4 sulfur cluster binding"/>
    <property type="evidence" value="ECO:0007669"/>
    <property type="project" value="UniProtKB-KW"/>
</dbReference>
<dbReference type="GO" id="GO:0005506">
    <property type="term" value="F:iron ion binding"/>
    <property type="evidence" value="ECO:0007669"/>
    <property type="project" value="UniProtKB-UniRule"/>
</dbReference>
<dbReference type="GO" id="GO:0008137">
    <property type="term" value="F:NADH dehydrogenase (ubiquinone) activity"/>
    <property type="evidence" value="ECO:0007669"/>
    <property type="project" value="InterPro"/>
</dbReference>
<dbReference type="GO" id="GO:0050136">
    <property type="term" value="F:NADH:ubiquinone reductase (non-electrogenic) activity"/>
    <property type="evidence" value="ECO:0007669"/>
    <property type="project" value="UniProtKB-UniRule"/>
</dbReference>
<dbReference type="GO" id="GO:0048038">
    <property type="term" value="F:quinone binding"/>
    <property type="evidence" value="ECO:0007669"/>
    <property type="project" value="UniProtKB-KW"/>
</dbReference>
<dbReference type="GO" id="GO:0009060">
    <property type="term" value="P:aerobic respiration"/>
    <property type="evidence" value="ECO:0007669"/>
    <property type="project" value="TreeGrafter"/>
</dbReference>
<dbReference type="GO" id="GO:0015990">
    <property type="term" value="P:electron transport coupled proton transport"/>
    <property type="evidence" value="ECO:0007669"/>
    <property type="project" value="TreeGrafter"/>
</dbReference>
<dbReference type="FunFam" id="3.40.50.12280:FF:000001">
    <property type="entry name" value="NADH-quinone oxidoreductase subunit B 2"/>
    <property type="match status" value="1"/>
</dbReference>
<dbReference type="Gene3D" id="3.40.50.12280">
    <property type="match status" value="1"/>
</dbReference>
<dbReference type="HAMAP" id="MF_01356">
    <property type="entry name" value="NDH1_NuoB"/>
    <property type="match status" value="1"/>
</dbReference>
<dbReference type="InterPro" id="IPR006137">
    <property type="entry name" value="NADH_UbQ_OxRdtase-like_20kDa"/>
</dbReference>
<dbReference type="InterPro" id="IPR006138">
    <property type="entry name" value="NADH_UQ_OxRdtase_20Kd_su"/>
</dbReference>
<dbReference type="NCBIfam" id="TIGR01957">
    <property type="entry name" value="nuoB_fam"/>
    <property type="match status" value="1"/>
</dbReference>
<dbReference type="NCBIfam" id="NF005012">
    <property type="entry name" value="PRK06411.1"/>
    <property type="match status" value="1"/>
</dbReference>
<dbReference type="PANTHER" id="PTHR11995">
    <property type="entry name" value="NADH DEHYDROGENASE"/>
    <property type="match status" value="1"/>
</dbReference>
<dbReference type="PANTHER" id="PTHR11995:SF14">
    <property type="entry name" value="NADH DEHYDROGENASE [UBIQUINONE] IRON-SULFUR PROTEIN 7, MITOCHONDRIAL"/>
    <property type="match status" value="1"/>
</dbReference>
<dbReference type="Pfam" id="PF01058">
    <property type="entry name" value="Oxidored_q6"/>
    <property type="match status" value="1"/>
</dbReference>
<dbReference type="SUPFAM" id="SSF56770">
    <property type="entry name" value="HydA/Nqo6-like"/>
    <property type="match status" value="1"/>
</dbReference>
<dbReference type="PROSITE" id="PS01150">
    <property type="entry name" value="COMPLEX1_20K"/>
    <property type="match status" value="1"/>
</dbReference>
<evidence type="ECO:0000250" key="1"/>
<evidence type="ECO:0000255" key="2">
    <source>
        <dbReference type="HAMAP-Rule" id="MF_01356"/>
    </source>
</evidence>
<proteinExistence type="inferred from homology"/>